<reference key="1">
    <citation type="journal article" date="2005" name="Nature">
        <title>The genome of the social amoeba Dictyostelium discoideum.</title>
        <authorList>
            <person name="Eichinger L."/>
            <person name="Pachebat J.A."/>
            <person name="Gloeckner G."/>
            <person name="Rajandream M.A."/>
            <person name="Sucgang R."/>
            <person name="Berriman M."/>
            <person name="Song J."/>
            <person name="Olsen R."/>
            <person name="Szafranski K."/>
            <person name="Xu Q."/>
            <person name="Tunggal B."/>
            <person name="Kummerfeld S."/>
            <person name="Madera M."/>
            <person name="Konfortov B.A."/>
            <person name="Rivero F."/>
            <person name="Bankier A.T."/>
            <person name="Lehmann R."/>
            <person name="Hamlin N."/>
            <person name="Davies R."/>
            <person name="Gaudet P."/>
            <person name="Fey P."/>
            <person name="Pilcher K."/>
            <person name="Chen G."/>
            <person name="Saunders D."/>
            <person name="Sodergren E.J."/>
            <person name="Davis P."/>
            <person name="Kerhornou A."/>
            <person name="Nie X."/>
            <person name="Hall N."/>
            <person name="Anjard C."/>
            <person name="Hemphill L."/>
            <person name="Bason N."/>
            <person name="Farbrother P."/>
            <person name="Desany B."/>
            <person name="Just E."/>
            <person name="Morio T."/>
            <person name="Rost R."/>
            <person name="Churcher C.M."/>
            <person name="Cooper J."/>
            <person name="Haydock S."/>
            <person name="van Driessche N."/>
            <person name="Cronin A."/>
            <person name="Goodhead I."/>
            <person name="Muzny D.M."/>
            <person name="Mourier T."/>
            <person name="Pain A."/>
            <person name="Lu M."/>
            <person name="Harper D."/>
            <person name="Lindsay R."/>
            <person name="Hauser H."/>
            <person name="James K.D."/>
            <person name="Quiles M."/>
            <person name="Madan Babu M."/>
            <person name="Saito T."/>
            <person name="Buchrieser C."/>
            <person name="Wardroper A."/>
            <person name="Felder M."/>
            <person name="Thangavelu M."/>
            <person name="Johnson D."/>
            <person name="Knights A."/>
            <person name="Loulseged H."/>
            <person name="Mungall K.L."/>
            <person name="Oliver K."/>
            <person name="Price C."/>
            <person name="Quail M.A."/>
            <person name="Urushihara H."/>
            <person name="Hernandez J."/>
            <person name="Rabbinowitsch E."/>
            <person name="Steffen D."/>
            <person name="Sanders M."/>
            <person name="Ma J."/>
            <person name="Kohara Y."/>
            <person name="Sharp S."/>
            <person name="Simmonds M.N."/>
            <person name="Spiegler S."/>
            <person name="Tivey A."/>
            <person name="Sugano S."/>
            <person name="White B."/>
            <person name="Walker D."/>
            <person name="Woodward J.R."/>
            <person name="Winckler T."/>
            <person name="Tanaka Y."/>
            <person name="Shaulsky G."/>
            <person name="Schleicher M."/>
            <person name="Weinstock G.M."/>
            <person name="Rosenthal A."/>
            <person name="Cox E.C."/>
            <person name="Chisholm R.L."/>
            <person name="Gibbs R.A."/>
            <person name="Loomis W.F."/>
            <person name="Platzer M."/>
            <person name="Kay R.R."/>
            <person name="Williams J.G."/>
            <person name="Dear P.H."/>
            <person name="Noegel A.A."/>
            <person name="Barrell B.G."/>
            <person name="Kuspa A."/>
        </authorList>
    </citation>
    <scope>NUCLEOTIDE SEQUENCE [LARGE SCALE GENOMIC DNA]</scope>
    <source>
        <strain>AX4</strain>
    </source>
</reference>
<evidence type="ECO:0000255" key="1">
    <source>
        <dbReference type="PROSITE-ProRule" id="PRU00538"/>
    </source>
</evidence>
<gene>
    <name type="primary">jcdA</name>
    <name type="ORF">DDB_G0290765</name>
</gene>
<dbReference type="EMBL" id="AAFI02000170">
    <property type="protein sequence ID" value="EAL62056.1"/>
    <property type="molecule type" value="Genomic_DNA"/>
</dbReference>
<dbReference type="RefSeq" id="XP_635559.1">
    <property type="nucleotide sequence ID" value="XM_630467.1"/>
</dbReference>
<dbReference type="SMR" id="Q54FM1"/>
<dbReference type="PaxDb" id="44689-DDB0238075"/>
<dbReference type="EnsemblProtists" id="EAL62056">
    <property type="protein sequence ID" value="EAL62056"/>
    <property type="gene ID" value="DDB_G0290765"/>
</dbReference>
<dbReference type="GeneID" id="8627817"/>
<dbReference type="KEGG" id="ddi:DDB_G0290765"/>
<dbReference type="dictyBase" id="DDB_G0290765">
    <property type="gene designation" value="jcdA"/>
</dbReference>
<dbReference type="VEuPathDB" id="AmoebaDB:DDB_G0290765"/>
<dbReference type="eggNOG" id="KOG2132">
    <property type="taxonomic scope" value="Eukaryota"/>
</dbReference>
<dbReference type="HOGENOM" id="CLU_974622_0_0_1"/>
<dbReference type="InParanoid" id="Q54FM1"/>
<dbReference type="OMA" id="NTDIHNM"/>
<dbReference type="PhylomeDB" id="Q54FM1"/>
<dbReference type="PRO" id="PR:Q54FM1"/>
<dbReference type="Proteomes" id="UP000002195">
    <property type="component" value="Chromosome 5"/>
</dbReference>
<dbReference type="GO" id="GO:0016706">
    <property type="term" value="F:2-oxoglutarate-dependent dioxygenase activity"/>
    <property type="evidence" value="ECO:0000318"/>
    <property type="project" value="GO_Central"/>
</dbReference>
<dbReference type="FunFam" id="2.60.120.650:FF:000080">
    <property type="entry name" value="JmjC domain-containing protein A"/>
    <property type="match status" value="1"/>
</dbReference>
<dbReference type="Gene3D" id="2.60.120.650">
    <property type="entry name" value="Cupin"/>
    <property type="match status" value="1"/>
</dbReference>
<dbReference type="InterPro" id="IPR041667">
    <property type="entry name" value="Cupin_8"/>
</dbReference>
<dbReference type="InterPro" id="IPR003347">
    <property type="entry name" value="JmjC_dom"/>
</dbReference>
<dbReference type="PANTHER" id="PTHR12461">
    <property type="entry name" value="HYPOXIA-INDUCIBLE FACTOR 1 ALPHA INHIBITOR-RELATED"/>
    <property type="match status" value="1"/>
</dbReference>
<dbReference type="PANTHER" id="PTHR12461:SF103">
    <property type="entry name" value="JMJC DOMAIN-CONTAINING PROTEIN A-RELATED"/>
    <property type="match status" value="1"/>
</dbReference>
<dbReference type="Pfam" id="PF13621">
    <property type="entry name" value="Cupin_8"/>
    <property type="match status" value="1"/>
</dbReference>
<dbReference type="SMART" id="SM00558">
    <property type="entry name" value="JmjC"/>
    <property type="match status" value="1"/>
</dbReference>
<dbReference type="SUPFAM" id="SSF51197">
    <property type="entry name" value="Clavaminate synthase-like"/>
    <property type="match status" value="1"/>
</dbReference>
<dbReference type="PROSITE" id="PS51184">
    <property type="entry name" value="JMJC"/>
    <property type="match status" value="1"/>
</dbReference>
<accession>Q54FM1</accession>
<name>JMJCA_DICDI</name>
<proteinExistence type="evidence at transcript level"/>
<feature type="chain" id="PRO_0000330923" description="JmjC domain-containing protein A">
    <location>
        <begin position="1"/>
        <end position="252"/>
    </location>
</feature>
<feature type="domain" description="JmjC" evidence="1">
    <location>
        <begin position="103"/>
        <end position="252"/>
    </location>
</feature>
<organism>
    <name type="scientific">Dictyostelium discoideum</name>
    <name type="common">Social amoeba</name>
    <dbReference type="NCBI Taxonomy" id="44689"/>
    <lineage>
        <taxon>Eukaryota</taxon>
        <taxon>Amoebozoa</taxon>
        <taxon>Evosea</taxon>
        <taxon>Eumycetozoa</taxon>
        <taxon>Dictyostelia</taxon>
        <taxon>Dictyosteliales</taxon>
        <taxon>Dictyosteliaceae</taxon>
        <taxon>Dictyostelium</taxon>
    </lineage>
</organism>
<keyword id="KW-1185">Reference proteome</keyword>
<sequence>MVSVCQVERNDVENLNKELFYSYIKSNKPVVFEKYRSQAIEKWTPDYLLSIIGDREVHVNMCTFGSMSDIVPMKFSEYLNKTLKNEFPINDSNGERIKKINKPYLRNFGMLDEFPILKEDVKNNESIFNKDVHNMVVMGSFIGCKDSATNFHKDTGENLVSVIHGKKFIVLIAPSDETNIKSKLSHDIEVQFDSNDFGSPIELHPAFSDCSKIYTTILTQGQSLFIPVGWIHYVHNIDTTISVSCWGKEMIM</sequence>
<protein>
    <recommendedName>
        <fullName>JmjC domain-containing protein A</fullName>
    </recommendedName>
    <alternativeName>
        <fullName>Jumonji domain-containing protein A</fullName>
    </alternativeName>
</protein>